<keyword id="KW-0021">Allosteric enzyme</keyword>
<keyword id="KW-0963">Cytoplasm</keyword>
<keyword id="KW-0328">Glycosyltransferase</keyword>
<keyword id="KW-0342">GTP-binding</keyword>
<keyword id="KW-0547">Nucleotide-binding</keyword>
<keyword id="KW-0539">Nucleus</keyword>
<keyword id="KW-1185">Reference proteome</keyword>
<keyword id="KW-0808">Transferase</keyword>
<dbReference type="EC" id="2.4.2.9"/>
<dbReference type="EMBL" id="CU329670">
    <property type="protein sequence ID" value="CAB65617.2"/>
    <property type="molecule type" value="Genomic_DNA"/>
</dbReference>
<dbReference type="RefSeq" id="NP_593505.2">
    <property type="nucleotide sequence ID" value="NM_001018939.2"/>
</dbReference>
<dbReference type="SMR" id="Q9US43"/>
<dbReference type="BioGRID" id="279688">
    <property type="interactions" value="17"/>
</dbReference>
<dbReference type="FunCoup" id="Q9US43">
    <property type="interactions" value="100"/>
</dbReference>
<dbReference type="STRING" id="284812.Q9US43"/>
<dbReference type="iPTMnet" id="Q9US43"/>
<dbReference type="PaxDb" id="4896-SPAC1002.17c.1"/>
<dbReference type="EnsemblFungi" id="SPAC1002.17c.1">
    <property type="protein sequence ID" value="SPAC1002.17c.1:pep"/>
    <property type="gene ID" value="SPAC1002.17c"/>
</dbReference>
<dbReference type="GeneID" id="2543260"/>
<dbReference type="KEGG" id="spo:2543260"/>
<dbReference type="PomBase" id="SPAC1002.17c">
    <property type="gene designation" value="urg2"/>
</dbReference>
<dbReference type="VEuPathDB" id="FungiDB:SPAC1002.17c"/>
<dbReference type="eggNOG" id="KOG4203">
    <property type="taxonomic scope" value="Eukaryota"/>
</dbReference>
<dbReference type="HOGENOM" id="CLU_067096_2_1_1"/>
<dbReference type="InParanoid" id="Q9US43"/>
<dbReference type="OMA" id="KPAHIKQ"/>
<dbReference type="UniPathway" id="UPA00574">
    <property type="reaction ID" value="UER00636"/>
</dbReference>
<dbReference type="PRO" id="PR:Q9US43"/>
<dbReference type="Proteomes" id="UP000002485">
    <property type="component" value="Chromosome I"/>
</dbReference>
<dbReference type="GO" id="GO:0005829">
    <property type="term" value="C:cytosol"/>
    <property type="evidence" value="ECO:0007005"/>
    <property type="project" value="PomBase"/>
</dbReference>
<dbReference type="GO" id="GO:0005634">
    <property type="term" value="C:nucleus"/>
    <property type="evidence" value="ECO:0007005"/>
    <property type="project" value="PomBase"/>
</dbReference>
<dbReference type="GO" id="GO:0005525">
    <property type="term" value="F:GTP binding"/>
    <property type="evidence" value="ECO:0007669"/>
    <property type="project" value="UniProtKB-KW"/>
</dbReference>
<dbReference type="GO" id="GO:0004845">
    <property type="term" value="F:uracil phosphoribosyltransferase activity"/>
    <property type="evidence" value="ECO:0000266"/>
    <property type="project" value="PomBase"/>
</dbReference>
<dbReference type="GO" id="GO:0006206">
    <property type="term" value="P:pyrimidine nucleobase metabolic process"/>
    <property type="evidence" value="ECO:0000303"/>
    <property type="project" value="PomBase"/>
</dbReference>
<dbReference type="GO" id="GO:0044206">
    <property type="term" value="P:UMP salvage"/>
    <property type="evidence" value="ECO:0007669"/>
    <property type="project" value="UniProtKB-UniPathway"/>
</dbReference>
<dbReference type="CDD" id="cd06223">
    <property type="entry name" value="PRTases_typeI"/>
    <property type="match status" value="1"/>
</dbReference>
<dbReference type="Gene3D" id="3.40.50.2020">
    <property type="match status" value="1"/>
</dbReference>
<dbReference type="InterPro" id="IPR000836">
    <property type="entry name" value="PRibTrfase_dom"/>
</dbReference>
<dbReference type="InterPro" id="IPR029057">
    <property type="entry name" value="PRTase-like"/>
</dbReference>
<dbReference type="InterPro" id="IPR050054">
    <property type="entry name" value="UPRTase/APRTase"/>
</dbReference>
<dbReference type="NCBIfam" id="NF001097">
    <property type="entry name" value="PRK00129.1"/>
    <property type="match status" value="1"/>
</dbReference>
<dbReference type="PANTHER" id="PTHR32315">
    <property type="entry name" value="ADENINE PHOSPHORIBOSYLTRANSFERASE"/>
    <property type="match status" value="1"/>
</dbReference>
<dbReference type="PANTHER" id="PTHR32315:SF4">
    <property type="entry name" value="URACIL PHOSPHORIBOSYLTRANSFERASE, CHLOROPLASTIC"/>
    <property type="match status" value="1"/>
</dbReference>
<dbReference type="Pfam" id="PF14681">
    <property type="entry name" value="UPRTase"/>
    <property type="match status" value="1"/>
</dbReference>
<dbReference type="SUPFAM" id="SSF53271">
    <property type="entry name" value="PRTase-like"/>
    <property type="match status" value="1"/>
</dbReference>
<evidence type="ECO:0000250" key="1"/>
<evidence type="ECO:0000250" key="2">
    <source>
        <dbReference type="UniProtKB" id="P70881"/>
    </source>
</evidence>
<evidence type="ECO:0000255" key="3"/>
<evidence type="ECO:0000269" key="4">
    <source>
    </source>
</evidence>
<evidence type="ECO:0000305" key="5"/>
<evidence type="ECO:0000312" key="6">
    <source>
        <dbReference type="PomBase" id="SPAC1002.17c"/>
    </source>
</evidence>
<organism>
    <name type="scientific">Schizosaccharomyces pombe (strain 972 / ATCC 24843)</name>
    <name type="common">Fission yeast</name>
    <dbReference type="NCBI Taxonomy" id="284812"/>
    <lineage>
        <taxon>Eukaryota</taxon>
        <taxon>Fungi</taxon>
        <taxon>Dikarya</taxon>
        <taxon>Ascomycota</taxon>
        <taxon>Taphrinomycotina</taxon>
        <taxon>Schizosaccharomycetes</taxon>
        <taxon>Schizosaccharomycetales</taxon>
        <taxon>Schizosaccharomycetaceae</taxon>
        <taxon>Schizosaccharomyces</taxon>
    </lineage>
</organism>
<protein>
    <recommendedName>
        <fullName>Putative uracil phosphoribosyltransferase urg2</fullName>
        <shortName>UPRTase urg2</shortName>
        <ecNumber>2.4.2.9</ecNumber>
    </recommendedName>
    <alternativeName>
        <fullName>UMP pyrophosphorylase urg2</fullName>
    </alternativeName>
</protein>
<name>UPP3_SCHPO</name>
<reference key="1">
    <citation type="journal article" date="2002" name="Nature">
        <title>The genome sequence of Schizosaccharomyces pombe.</title>
        <authorList>
            <person name="Wood V."/>
            <person name="Gwilliam R."/>
            <person name="Rajandream M.A."/>
            <person name="Lyne M.H."/>
            <person name="Lyne R."/>
            <person name="Stewart A."/>
            <person name="Sgouros J.G."/>
            <person name="Peat N."/>
            <person name="Hayles J."/>
            <person name="Baker S.G."/>
            <person name="Basham D."/>
            <person name="Bowman S."/>
            <person name="Brooks K."/>
            <person name="Brown D."/>
            <person name="Brown S."/>
            <person name="Chillingworth T."/>
            <person name="Churcher C.M."/>
            <person name="Collins M."/>
            <person name="Connor R."/>
            <person name="Cronin A."/>
            <person name="Davis P."/>
            <person name="Feltwell T."/>
            <person name="Fraser A."/>
            <person name="Gentles S."/>
            <person name="Goble A."/>
            <person name="Hamlin N."/>
            <person name="Harris D.E."/>
            <person name="Hidalgo J."/>
            <person name="Hodgson G."/>
            <person name="Holroyd S."/>
            <person name="Hornsby T."/>
            <person name="Howarth S."/>
            <person name="Huckle E.J."/>
            <person name="Hunt S."/>
            <person name="Jagels K."/>
            <person name="James K.D."/>
            <person name="Jones L."/>
            <person name="Jones M."/>
            <person name="Leather S."/>
            <person name="McDonald S."/>
            <person name="McLean J."/>
            <person name="Mooney P."/>
            <person name="Moule S."/>
            <person name="Mungall K.L."/>
            <person name="Murphy L.D."/>
            <person name="Niblett D."/>
            <person name="Odell C."/>
            <person name="Oliver K."/>
            <person name="O'Neil S."/>
            <person name="Pearson D."/>
            <person name="Quail M.A."/>
            <person name="Rabbinowitsch E."/>
            <person name="Rutherford K.M."/>
            <person name="Rutter S."/>
            <person name="Saunders D."/>
            <person name="Seeger K."/>
            <person name="Sharp S."/>
            <person name="Skelton J."/>
            <person name="Simmonds M.N."/>
            <person name="Squares R."/>
            <person name="Squares S."/>
            <person name="Stevens K."/>
            <person name="Taylor K."/>
            <person name="Taylor R.G."/>
            <person name="Tivey A."/>
            <person name="Walsh S.V."/>
            <person name="Warren T."/>
            <person name="Whitehead S."/>
            <person name="Woodward J.R."/>
            <person name="Volckaert G."/>
            <person name="Aert R."/>
            <person name="Robben J."/>
            <person name="Grymonprez B."/>
            <person name="Weltjens I."/>
            <person name="Vanstreels E."/>
            <person name="Rieger M."/>
            <person name="Schaefer M."/>
            <person name="Mueller-Auer S."/>
            <person name="Gabel C."/>
            <person name="Fuchs M."/>
            <person name="Duesterhoeft A."/>
            <person name="Fritzc C."/>
            <person name="Holzer E."/>
            <person name="Moestl D."/>
            <person name="Hilbert H."/>
            <person name="Borzym K."/>
            <person name="Langer I."/>
            <person name="Beck A."/>
            <person name="Lehrach H."/>
            <person name="Reinhardt R."/>
            <person name="Pohl T.M."/>
            <person name="Eger P."/>
            <person name="Zimmermann W."/>
            <person name="Wedler H."/>
            <person name="Wambutt R."/>
            <person name="Purnelle B."/>
            <person name="Goffeau A."/>
            <person name="Cadieu E."/>
            <person name="Dreano S."/>
            <person name="Gloux S."/>
            <person name="Lelaure V."/>
            <person name="Mottier S."/>
            <person name="Galibert F."/>
            <person name="Aves S.J."/>
            <person name="Xiang Z."/>
            <person name="Hunt C."/>
            <person name="Moore K."/>
            <person name="Hurst S.M."/>
            <person name="Lucas M."/>
            <person name="Rochet M."/>
            <person name="Gaillardin C."/>
            <person name="Tallada V.A."/>
            <person name="Garzon A."/>
            <person name="Thode G."/>
            <person name="Daga R.R."/>
            <person name="Cruzado L."/>
            <person name="Jimenez J."/>
            <person name="Sanchez M."/>
            <person name="del Rey F."/>
            <person name="Benito J."/>
            <person name="Dominguez A."/>
            <person name="Revuelta J.L."/>
            <person name="Moreno S."/>
            <person name="Armstrong J."/>
            <person name="Forsburg S.L."/>
            <person name="Cerutti L."/>
            <person name="Lowe T."/>
            <person name="McCombie W.R."/>
            <person name="Paulsen I."/>
            <person name="Potashkin J."/>
            <person name="Shpakovski G.V."/>
            <person name="Ussery D."/>
            <person name="Barrell B.G."/>
            <person name="Nurse P."/>
        </authorList>
    </citation>
    <scope>NUCLEOTIDE SEQUENCE [LARGE SCALE GENOMIC DNA]</scope>
    <source>
        <strain>972 / ATCC 24843</strain>
    </source>
</reference>
<reference key="2">
    <citation type="journal article" date="2011" name="Science">
        <title>Comparative functional genomics of the fission yeasts.</title>
        <authorList>
            <person name="Rhind N."/>
            <person name="Chen Z."/>
            <person name="Yassour M."/>
            <person name="Thompson D.A."/>
            <person name="Haas B.J."/>
            <person name="Habib N."/>
            <person name="Wapinski I."/>
            <person name="Roy S."/>
            <person name="Lin M.F."/>
            <person name="Heiman D.I."/>
            <person name="Young S.K."/>
            <person name="Furuya K."/>
            <person name="Guo Y."/>
            <person name="Pidoux A."/>
            <person name="Chen H.M."/>
            <person name="Robbertse B."/>
            <person name="Goldberg J.M."/>
            <person name="Aoki K."/>
            <person name="Bayne E.H."/>
            <person name="Berlin A.M."/>
            <person name="Desjardins C.A."/>
            <person name="Dobbs E."/>
            <person name="Dukaj L."/>
            <person name="Fan L."/>
            <person name="FitzGerald M.G."/>
            <person name="French C."/>
            <person name="Gujja S."/>
            <person name="Hansen K."/>
            <person name="Keifenheim D."/>
            <person name="Levin J.Z."/>
            <person name="Mosher R.A."/>
            <person name="Mueller C.A."/>
            <person name="Pfiffner J."/>
            <person name="Priest M."/>
            <person name="Russ C."/>
            <person name="Smialowska A."/>
            <person name="Swoboda P."/>
            <person name="Sykes S.M."/>
            <person name="Vaughn M."/>
            <person name="Vengrova S."/>
            <person name="Yoder R."/>
            <person name="Zeng Q."/>
            <person name="Allshire R."/>
            <person name="Baulcombe D."/>
            <person name="Birren B.W."/>
            <person name="Brown W."/>
            <person name="Ekwall K."/>
            <person name="Kellis M."/>
            <person name="Leatherwood J."/>
            <person name="Levin H."/>
            <person name="Margalit H."/>
            <person name="Martienssen R."/>
            <person name="Nieduszynski C.A."/>
            <person name="Spatafora J.W."/>
            <person name="Friedman N."/>
            <person name="Dalgaard J.Z."/>
            <person name="Baumann P."/>
            <person name="Niki H."/>
            <person name="Regev A."/>
            <person name="Nusbaum C."/>
        </authorList>
    </citation>
    <scope>REVISION OF GENE MODEL</scope>
</reference>
<reference evidence="5" key="3">
    <citation type="journal article" date="2006" name="Nat. Biotechnol.">
        <title>ORFeome cloning and global analysis of protein localization in the fission yeast Schizosaccharomyces pombe.</title>
        <authorList>
            <person name="Matsuyama A."/>
            <person name="Arai R."/>
            <person name="Yashiroda Y."/>
            <person name="Shirai A."/>
            <person name="Kamata A."/>
            <person name="Sekido S."/>
            <person name="Kobayashi Y."/>
            <person name="Hashimoto A."/>
            <person name="Hamamoto M."/>
            <person name="Hiraoka Y."/>
            <person name="Horinouchi S."/>
            <person name="Yoshida M."/>
        </authorList>
    </citation>
    <scope>SUBCELLULAR LOCATION [LARGE SCALE ANALYSIS]</scope>
</reference>
<proteinExistence type="inferred from homology"/>
<accession>Q9US43</accession>
<comment type="function">
    <text evidence="5">Catalyzes the conversion of uracil and 5-phospho-alpha-D-ribose 1-diphosphate (PRPP) to UMP and diphosphate.</text>
</comment>
<comment type="catalytic activity">
    <reaction evidence="2">
        <text>UMP + diphosphate = 5-phospho-alpha-D-ribose 1-diphosphate + uracil</text>
        <dbReference type="Rhea" id="RHEA:13017"/>
        <dbReference type="ChEBI" id="CHEBI:17568"/>
        <dbReference type="ChEBI" id="CHEBI:33019"/>
        <dbReference type="ChEBI" id="CHEBI:57865"/>
        <dbReference type="ChEBI" id="CHEBI:58017"/>
        <dbReference type="EC" id="2.4.2.9"/>
    </reaction>
</comment>
<comment type="cofactor">
    <cofactor evidence="1">
        <name>Mg(2+)</name>
        <dbReference type="ChEBI" id="CHEBI:18420"/>
    </cofactor>
    <text evidence="1">Binds 1 Mg(2+) ion per subunit. The magnesium is bound as Mg-PRPP.</text>
</comment>
<comment type="activity regulation">
    <text evidence="5">Allosterically activated by GTP.</text>
</comment>
<comment type="pathway">
    <text>Pyrimidine metabolism; UMP biosynthesis via salvage pathway; UMP from uracil: step 1/1.</text>
</comment>
<comment type="subcellular location">
    <subcellularLocation>
        <location evidence="4">Cytoplasm</location>
    </subcellularLocation>
    <subcellularLocation>
        <location evidence="4">Nucleus</location>
    </subcellularLocation>
</comment>
<comment type="similarity">
    <text evidence="3">Belongs to the UPRTase family.</text>
</comment>
<gene>
    <name evidence="6" type="primary">urg2</name>
    <name type="ORF">SPAC1002.17c</name>
</gene>
<feature type="chain" id="PRO_0000309558" description="Putative uracil phosphoribosyltransferase urg2">
    <location>
        <begin position="1"/>
        <end position="204"/>
    </location>
</feature>
<feature type="binding site" evidence="1">
    <location>
        <position position="75"/>
    </location>
    <ligand>
        <name>5-phospho-alpha-D-ribose 1-diphosphate</name>
        <dbReference type="ChEBI" id="CHEBI:58017"/>
    </ligand>
</feature>
<feature type="binding site" evidence="1">
    <location>
        <position position="100"/>
    </location>
    <ligand>
        <name>5-phospho-alpha-D-ribose 1-diphosphate</name>
        <dbReference type="ChEBI" id="CHEBI:58017"/>
    </ligand>
</feature>
<feature type="binding site" evidence="1">
    <location>
        <begin position="126"/>
        <end position="134"/>
    </location>
    <ligand>
        <name>5-phospho-alpha-D-ribose 1-diphosphate</name>
        <dbReference type="ChEBI" id="CHEBI:58017"/>
    </ligand>
</feature>
<feature type="binding site" evidence="1">
    <location>
        <position position="187"/>
    </location>
    <ligand>
        <name>D-ribose 5-phosphate</name>
        <dbReference type="ChEBI" id="CHEBI:78346"/>
    </ligand>
</feature>
<feature type="binding site" evidence="1">
    <location>
        <position position="188"/>
    </location>
    <ligand>
        <name>uracil</name>
        <dbReference type="ChEBI" id="CHEBI:17568"/>
    </ligand>
</feature>
<feature type="binding site" evidence="1">
    <location>
        <begin position="193"/>
        <end position="195"/>
    </location>
    <ligand>
        <name>uracil</name>
        <dbReference type="ChEBI" id="CHEBI:17568"/>
    </ligand>
</feature>
<feature type="binding site" evidence="1">
    <location>
        <position position="194"/>
    </location>
    <ligand>
        <name>5-phospho-alpha-D-ribose 1-diphosphate</name>
        <dbReference type="ChEBI" id="CHEBI:58017"/>
    </ligand>
</feature>
<sequence>MSTTTTVSAIRTVEEMSNITISSHPVVNEQIAILRDRSLKPSQVRSVVDEISRFLAYESTKTLKSPSVSIVPVLRSGMSMMSAFSKVLPDVPIYHIGIFREKSTLQPIEYYNKLPKKSTDTAVILDPVMATGGTANAVITTLQEWGCKNIIFVSVLASEQALTRFSNIPGVEFVIGAVDKSLDAKGYLVPGVGDIGDRLYGATA</sequence>